<proteinExistence type="inferred from homology"/>
<accession>B6YWD9</accession>
<gene>
    <name evidence="1" type="primary">pfdA</name>
    <name type="ordered locus">TON_0914</name>
</gene>
<dbReference type="EMBL" id="CP000855">
    <property type="protein sequence ID" value="ACJ16402.1"/>
    <property type="molecule type" value="Genomic_DNA"/>
</dbReference>
<dbReference type="RefSeq" id="WP_012571874.1">
    <property type="nucleotide sequence ID" value="NC_011529.1"/>
</dbReference>
<dbReference type="SMR" id="B6YWD9"/>
<dbReference type="STRING" id="523850.TON_0914"/>
<dbReference type="GeneID" id="7017217"/>
<dbReference type="KEGG" id="ton:TON_0914"/>
<dbReference type="PATRIC" id="fig|523850.10.peg.922"/>
<dbReference type="eggNOG" id="arCOG01341">
    <property type="taxonomic scope" value="Archaea"/>
</dbReference>
<dbReference type="HOGENOM" id="CLU_091867_1_3_2"/>
<dbReference type="OrthoDB" id="10045at2157"/>
<dbReference type="Proteomes" id="UP000002727">
    <property type="component" value="Chromosome"/>
</dbReference>
<dbReference type="GO" id="GO:0005737">
    <property type="term" value="C:cytoplasm"/>
    <property type="evidence" value="ECO:0007669"/>
    <property type="project" value="UniProtKB-SubCell"/>
</dbReference>
<dbReference type="GO" id="GO:0016272">
    <property type="term" value="C:prefoldin complex"/>
    <property type="evidence" value="ECO:0007669"/>
    <property type="project" value="UniProtKB-UniRule"/>
</dbReference>
<dbReference type="GO" id="GO:0051082">
    <property type="term" value="F:unfolded protein binding"/>
    <property type="evidence" value="ECO:0007669"/>
    <property type="project" value="UniProtKB-UniRule"/>
</dbReference>
<dbReference type="GO" id="GO:0006457">
    <property type="term" value="P:protein folding"/>
    <property type="evidence" value="ECO:0007669"/>
    <property type="project" value="UniProtKB-UniRule"/>
</dbReference>
<dbReference type="CDD" id="cd23160">
    <property type="entry name" value="Prefoldin_alpha_GimC"/>
    <property type="match status" value="1"/>
</dbReference>
<dbReference type="Gene3D" id="1.10.287.370">
    <property type="match status" value="1"/>
</dbReference>
<dbReference type="HAMAP" id="MF_00308">
    <property type="entry name" value="PfdA"/>
    <property type="match status" value="1"/>
</dbReference>
<dbReference type="InterPro" id="IPR011599">
    <property type="entry name" value="PFD_alpha_archaea"/>
</dbReference>
<dbReference type="InterPro" id="IPR009053">
    <property type="entry name" value="Prefoldin"/>
</dbReference>
<dbReference type="InterPro" id="IPR004127">
    <property type="entry name" value="Prefoldin_subunit_alpha"/>
</dbReference>
<dbReference type="NCBIfam" id="TIGR00293">
    <property type="entry name" value="prefoldin subunit alpha"/>
    <property type="match status" value="1"/>
</dbReference>
<dbReference type="PANTHER" id="PTHR12674">
    <property type="entry name" value="PREFOLDIN SUBUNIT 5"/>
    <property type="match status" value="1"/>
</dbReference>
<dbReference type="PANTHER" id="PTHR12674:SF2">
    <property type="entry name" value="PREFOLDIN SUBUNIT 5"/>
    <property type="match status" value="1"/>
</dbReference>
<dbReference type="Pfam" id="PF02996">
    <property type="entry name" value="Prefoldin"/>
    <property type="match status" value="1"/>
</dbReference>
<dbReference type="SUPFAM" id="SSF46579">
    <property type="entry name" value="Prefoldin"/>
    <property type="match status" value="1"/>
</dbReference>
<sequence length="147" mass="16514">MAERNEQLERLAYEYQLLQAQAQLLAQNLELLTLGRNEFQAVKQTLEELKKVEDEKPEILVPIGAGSFLKGMIVDKNSAIVSVGSGYATEKSLDDAIGYLDARIKEYDEAIRKTQEALAKLEGQLQELAQKAQKLQQEAAMRFSVKE</sequence>
<organism>
    <name type="scientific">Thermococcus onnurineus (strain NA1)</name>
    <dbReference type="NCBI Taxonomy" id="523850"/>
    <lineage>
        <taxon>Archaea</taxon>
        <taxon>Methanobacteriati</taxon>
        <taxon>Methanobacteriota</taxon>
        <taxon>Thermococci</taxon>
        <taxon>Thermococcales</taxon>
        <taxon>Thermococcaceae</taxon>
        <taxon>Thermococcus</taxon>
    </lineage>
</organism>
<keyword id="KW-0143">Chaperone</keyword>
<keyword id="KW-0963">Cytoplasm</keyword>
<evidence type="ECO:0000255" key="1">
    <source>
        <dbReference type="HAMAP-Rule" id="MF_00308"/>
    </source>
</evidence>
<name>PFDA_THEON</name>
<protein>
    <recommendedName>
        <fullName evidence="1">Prefoldin subunit alpha</fullName>
    </recommendedName>
    <alternativeName>
        <fullName evidence="1">GimC subunit alpha</fullName>
    </alternativeName>
</protein>
<feature type="chain" id="PRO_1000115629" description="Prefoldin subunit alpha">
    <location>
        <begin position="1"/>
        <end position="147"/>
    </location>
</feature>
<reference key="1">
    <citation type="journal article" date="2008" name="J. Bacteriol.">
        <title>The complete genome sequence of Thermococcus onnurineus NA1 reveals a mixed heterotrophic and carboxydotrophic metabolism.</title>
        <authorList>
            <person name="Lee H.S."/>
            <person name="Kang S.G."/>
            <person name="Bae S.S."/>
            <person name="Lim J.K."/>
            <person name="Cho Y."/>
            <person name="Kim Y.J."/>
            <person name="Jeon J.H."/>
            <person name="Cha S.-S."/>
            <person name="Kwon K.K."/>
            <person name="Kim H.-T."/>
            <person name="Park C.-J."/>
            <person name="Lee H.-W."/>
            <person name="Kim S.I."/>
            <person name="Chun J."/>
            <person name="Colwell R.R."/>
            <person name="Kim S.-J."/>
            <person name="Lee J.-H."/>
        </authorList>
    </citation>
    <scope>NUCLEOTIDE SEQUENCE [LARGE SCALE GENOMIC DNA]</scope>
    <source>
        <strain>NA1</strain>
    </source>
</reference>
<comment type="function">
    <text evidence="1">Molecular chaperone capable of stabilizing a range of proteins. Seems to fulfill an ATP-independent, HSP70-like function in archaeal de novo protein folding.</text>
</comment>
<comment type="subunit">
    <text evidence="1">Heterohexamer of two alpha and four beta subunits.</text>
</comment>
<comment type="subcellular location">
    <subcellularLocation>
        <location evidence="1">Cytoplasm</location>
    </subcellularLocation>
</comment>
<comment type="similarity">
    <text evidence="1">Belongs to the prefoldin alpha subunit family.</text>
</comment>